<gene>
    <name type="primary">GHSR</name>
</gene>
<organism>
    <name type="scientific">Sus scrofa</name>
    <name type="common">Pig</name>
    <dbReference type="NCBI Taxonomy" id="9823"/>
    <lineage>
        <taxon>Eukaryota</taxon>
        <taxon>Metazoa</taxon>
        <taxon>Chordata</taxon>
        <taxon>Craniata</taxon>
        <taxon>Vertebrata</taxon>
        <taxon>Euteleostomi</taxon>
        <taxon>Mammalia</taxon>
        <taxon>Eutheria</taxon>
        <taxon>Laurasiatheria</taxon>
        <taxon>Artiodactyla</taxon>
        <taxon>Suina</taxon>
        <taxon>Suidae</taxon>
        <taxon>Sus</taxon>
    </lineage>
</organism>
<comment type="function">
    <text>Receptor for ghrelin, coupled to G-alpha-11 proteins. Stimulates growth hormone secretion. Also binds other growth hormone releasing peptides (GHRP) (e.g. Met-enkephalin and GHRP-6) as well as non-peptide, low molecular weight secretagogues (e.g. L-692,429, MK-0677, adenosine).</text>
</comment>
<comment type="subcellular location">
    <subcellularLocation>
        <location>Cell membrane</location>
        <topology>Multi-pass membrane protein</topology>
    </subcellularLocation>
</comment>
<comment type="alternative products">
    <event type="alternative splicing"/>
    <isoform>
        <id>Q95254-1</id>
        <name>1A</name>
        <sequence type="displayed"/>
    </isoform>
    <isoform>
        <id>Q95254-2</id>
        <name>1B</name>
        <sequence type="described" ref="VSP_001918 VSP_001919"/>
    </isoform>
</comment>
<comment type="tissue specificity">
    <text>Pituitary and hypothalamus.</text>
</comment>
<comment type="similarity">
    <text evidence="2">Belongs to the G-protein coupled receptor 1 family.</text>
</comment>
<reference key="1">
    <citation type="journal article" date="1996" name="Science">
        <title>A receptor in pituitary and hypothalamus that functions in growth hormone release.</title>
        <authorList>
            <person name="Howard A.D."/>
            <person name="Feighner S.D."/>
            <person name="Cully D.F."/>
            <person name="Arena J.P."/>
            <person name="Liberator P.A."/>
            <person name="Rosenblum C.I."/>
            <person name="Hamelin M."/>
            <person name="Hreniuk D.L."/>
            <person name="Palyha O.C."/>
            <person name="Anderson J."/>
            <person name="Paress P.S."/>
            <person name="Diaz C."/>
            <person name="Chou M."/>
            <person name="Liu K.K."/>
            <person name="McKee K.K."/>
            <person name="Pong S.-S."/>
            <person name="Chaung L.-Y."/>
            <person name="Elbrecht A."/>
            <person name="Dashkevicz M."/>
            <person name="Heavens R."/>
            <person name="Rigby M."/>
            <person name="Sirinathsinghji D.J.S."/>
            <person name="Dean D.C."/>
            <person name="Melillo D.G."/>
            <person name="Patchett A.A."/>
            <person name="Nargund R."/>
            <person name="Griffin P.R."/>
            <person name="Demartino J.A."/>
            <person name="Gupta S.K."/>
            <person name="Schaeffer J.M."/>
            <person name="Smith R.G."/>
            <person name="van der Ploeg L.H.T."/>
        </authorList>
    </citation>
    <scope>NUCLEOTIDE SEQUENCE [MRNA] (ISOFORMS 1A AND 1B)</scope>
    <source>
        <strain>Yorkshire</strain>
        <tissue>Pituitary</tissue>
    </source>
</reference>
<accession>Q95254</accession>
<accession>Q95255</accession>
<protein>
    <recommendedName>
        <fullName>Growth hormone secretagogue receptor type 1</fullName>
        <shortName>GHS-R</shortName>
    </recommendedName>
    <alternativeName>
        <fullName>GH-releasing peptide receptor</fullName>
        <shortName>GHRP</shortName>
    </alternativeName>
    <alternativeName>
        <fullName>Ghrelin receptor</fullName>
    </alternativeName>
</protein>
<sequence length="366" mass="41195">MWNATPSEEPGPNLTLPDLGWDAPPENDSLVEELLPLFPTPLLAGVTATCVALFVVGIAGNLLTMLVVSRFREMRTTTNLYLSSMAFSDLLIFLCMPLDLFRLWQYRPWNLGNLLCKLFQFVSESCTYATVLTITALSVERYFAICFPLRAKVVVTKGRVKLVILVIWAVAFCSAGPIFVLVGVEHDNGTDPRDTNECRATEFAVRSGLLTVMVWVSSVFFFLPVFCLTVLYSLIGRKLWRRKRGEAAVGSSLRDQNHKQTVKMLAVVVFAFILCWLPFHVGRYLFSKSLEPGSVEIAQISQYCNLVSFVLFYLSAAINPILYNIMSKKYRVAVFKLLGFEPFSQRKLSTLKDESSRAWTESSINT</sequence>
<name>GHSR_PIG</name>
<dbReference type="EMBL" id="U60178">
    <property type="protein sequence ID" value="AAC48630.1"/>
    <property type="molecule type" value="mRNA"/>
</dbReference>
<dbReference type="EMBL" id="U60180">
    <property type="protein sequence ID" value="AAC48631.1"/>
    <property type="molecule type" value="mRNA"/>
</dbReference>
<dbReference type="RefSeq" id="NP_999345.1">
    <molecule id="Q95254-1"/>
    <property type="nucleotide sequence ID" value="NM_214180.1"/>
</dbReference>
<dbReference type="RefSeq" id="XP_020924200.1">
    <molecule id="Q95254-1"/>
    <property type="nucleotide sequence ID" value="XM_021068541.1"/>
</dbReference>
<dbReference type="RefSeq" id="XP_020924201.1">
    <molecule id="Q95254-1"/>
    <property type="nucleotide sequence ID" value="XM_021068542.1"/>
</dbReference>
<dbReference type="SMR" id="Q95254"/>
<dbReference type="FunCoup" id="Q95254">
    <property type="interactions" value="80"/>
</dbReference>
<dbReference type="STRING" id="9823.ENSSSCP00000012525"/>
<dbReference type="BindingDB" id="Q95254"/>
<dbReference type="ChEMBL" id="CHEMBL2224"/>
<dbReference type="GlyCosmos" id="Q95254">
    <property type="glycosylation" value="2 sites, No reported glycans"/>
</dbReference>
<dbReference type="GlyGen" id="Q95254">
    <property type="glycosylation" value="2 sites"/>
</dbReference>
<dbReference type="PaxDb" id="9823-ENSSSCP00000012525"/>
<dbReference type="Ensembl" id="ENSSSCT00015103407.1">
    <molecule id="Q95254-1"/>
    <property type="protein sequence ID" value="ENSSSCP00015043090.1"/>
    <property type="gene ID" value="ENSSSCG00015076501.1"/>
</dbReference>
<dbReference type="Ensembl" id="ENSSSCT00025089656.1">
    <molecule id="Q95254-1"/>
    <property type="protein sequence ID" value="ENSSSCP00025039240.1"/>
    <property type="gene ID" value="ENSSSCG00025065336.1"/>
</dbReference>
<dbReference type="Ensembl" id="ENSSSCT00030015905.1">
    <molecule id="Q95254-1"/>
    <property type="protein sequence ID" value="ENSSSCP00030007123.1"/>
    <property type="gene ID" value="ENSSSCG00030011593.1"/>
</dbReference>
<dbReference type="Ensembl" id="ENSSSCT00035016614.1">
    <molecule id="Q95254-1"/>
    <property type="protein sequence ID" value="ENSSSCP00035005755.1"/>
    <property type="gene ID" value="ENSSSCG00035013159.1"/>
</dbReference>
<dbReference type="Ensembl" id="ENSSSCT00040003967.1">
    <molecule id="Q95254-1"/>
    <property type="protein sequence ID" value="ENSSSCP00040001235.1"/>
    <property type="gene ID" value="ENSSSCG00040003174.1"/>
</dbReference>
<dbReference type="Ensembl" id="ENSSSCT00045058121.1">
    <molecule id="Q95254-1"/>
    <property type="protein sequence ID" value="ENSSSCP00045040628.1"/>
    <property type="gene ID" value="ENSSSCG00045033986.1"/>
</dbReference>
<dbReference type="Ensembl" id="ENSSSCT00050044816.1">
    <molecule id="Q95254-1"/>
    <property type="protein sequence ID" value="ENSSSCP00050018415.1"/>
    <property type="gene ID" value="ENSSSCG00050033428.1"/>
</dbReference>
<dbReference type="Ensembl" id="ENSSSCT00055028026.1">
    <molecule id="Q95254-1"/>
    <property type="protein sequence ID" value="ENSSSCP00055022326.1"/>
    <property type="gene ID" value="ENSSSCG00055014215.1"/>
</dbReference>
<dbReference type="Ensembl" id="ENSSSCT00060097610.1">
    <molecule id="Q95254-1"/>
    <property type="protein sequence ID" value="ENSSSCP00060042315.1"/>
    <property type="gene ID" value="ENSSSCG00060071407.1"/>
</dbReference>
<dbReference type="Ensembl" id="ENSSSCT00065060265.1">
    <molecule id="Q95254-1"/>
    <property type="protein sequence ID" value="ENSSSCP00065026114.1"/>
    <property type="gene ID" value="ENSSSCG00065044068.1"/>
</dbReference>
<dbReference type="Ensembl" id="ENSSSCT00070044601.1">
    <molecule id="Q95254-1"/>
    <property type="protein sequence ID" value="ENSSSCP00070037580.1"/>
    <property type="gene ID" value="ENSSSCG00070022444.1"/>
</dbReference>
<dbReference type="Ensembl" id="ENSSSCT00085047661">
    <molecule id="Q95254-1"/>
    <property type="protein sequence ID" value="ENSSSCP00085033280"/>
    <property type="gene ID" value="ENSSSCG00085024846"/>
</dbReference>
<dbReference type="Ensembl" id="ENSSSCT00090048830">
    <molecule id="Q95254-1"/>
    <property type="protein sequence ID" value="ENSSSCP00090030293"/>
    <property type="gene ID" value="ENSSSCG00090027633"/>
</dbReference>
<dbReference type="Ensembl" id="ENSSSCT00105023011">
    <molecule id="Q95254-1"/>
    <property type="protein sequence ID" value="ENSSSCP00105016532"/>
    <property type="gene ID" value="ENSSSCG00105011639"/>
</dbReference>
<dbReference type="Ensembl" id="ENSSSCT00110003133">
    <molecule id="Q95254-1"/>
    <property type="protein sequence ID" value="ENSSSCP00110002458"/>
    <property type="gene ID" value="ENSSSCG00110001541"/>
</dbReference>
<dbReference type="Ensembl" id="ENSSSCT00115023555">
    <molecule id="Q95254-1"/>
    <property type="protein sequence ID" value="ENSSSCP00115022330"/>
    <property type="gene ID" value="ENSSSCG00115013587"/>
</dbReference>
<dbReference type="Ensembl" id="ENSSSCT00130048284">
    <molecule id="Q95254-1"/>
    <property type="protein sequence ID" value="ENSSSCP00130033981"/>
    <property type="gene ID" value="ENSSSCG00130024974"/>
</dbReference>
<dbReference type="GeneID" id="397372"/>
<dbReference type="KEGG" id="ssc:397372"/>
<dbReference type="CTD" id="2693"/>
<dbReference type="eggNOG" id="KOG3656">
    <property type="taxonomic scope" value="Eukaryota"/>
</dbReference>
<dbReference type="HOGENOM" id="CLU_962965_0_0_1"/>
<dbReference type="InParanoid" id="Q95254"/>
<dbReference type="OMA" id="IGNLMTM"/>
<dbReference type="OrthoDB" id="10011262at2759"/>
<dbReference type="TreeFam" id="TF332184"/>
<dbReference type="Reactome" id="R-SSC-416476">
    <property type="pathway name" value="G alpha (q) signalling events"/>
</dbReference>
<dbReference type="Proteomes" id="UP000008227">
    <property type="component" value="Unplaced"/>
</dbReference>
<dbReference type="Proteomes" id="UP000314985">
    <property type="component" value="Chromosome 13"/>
</dbReference>
<dbReference type="Proteomes" id="UP000694570">
    <property type="component" value="Unplaced"/>
</dbReference>
<dbReference type="Proteomes" id="UP000694571">
    <property type="component" value="Unplaced"/>
</dbReference>
<dbReference type="Proteomes" id="UP000694720">
    <property type="component" value="Unplaced"/>
</dbReference>
<dbReference type="Proteomes" id="UP000694722">
    <property type="component" value="Unplaced"/>
</dbReference>
<dbReference type="Proteomes" id="UP000694723">
    <property type="component" value="Unplaced"/>
</dbReference>
<dbReference type="Proteomes" id="UP000694724">
    <property type="component" value="Unplaced"/>
</dbReference>
<dbReference type="Proteomes" id="UP000694725">
    <property type="component" value="Unplaced"/>
</dbReference>
<dbReference type="Proteomes" id="UP000694726">
    <property type="component" value="Unplaced"/>
</dbReference>
<dbReference type="Proteomes" id="UP000694727">
    <property type="component" value="Unplaced"/>
</dbReference>
<dbReference type="Proteomes" id="UP000694728">
    <property type="component" value="Unplaced"/>
</dbReference>
<dbReference type="Bgee" id="ENSSSCG00000020906">
    <property type="expression patterns" value="Expressed in caecum and 42 other cell types or tissues"/>
</dbReference>
<dbReference type="ExpressionAtlas" id="Q95254">
    <property type="expression patterns" value="baseline and differential"/>
</dbReference>
<dbReference type="GO" id="GO:0009986">
    <property type="term" value="C:cell surface"/>
    <property type="evidence" value="ECO:0000314"/>
    <property type="project" value="HGNC-UCL"/>
</dbReference>
<dbReference type="GO" id="GO:0045121">
    <property type="term" value="C:membrane raft"/>
    <property type="evidence" value="ECO:0000250"/>
    <property type="project" value="UniProtKB"/>
</dbReference>
<dbReference type="GO" id="GO:0043005">
    <property type="term" value="C:neuron projection"/>
    <property type="evidence" value="ECO:0000250"/>
    <property type="project" value="UniProtKB"/>
</dbReference>
<dbReference type="GO" id="GO:0005886">
    <property type="term" value="C:plasma membrane"/>
    <property type="evidence" value="ECO:0000318"/>
    <property type="project" value="GO_Central"/>
</dbReference>
<dbReference type="GO" id="GO:0004930">
    <property type="term" value="F:G protein-coupled receptor activity"/>
    <property type="evidence" value="ECO:0000314"/>
    <property type="project" value="HGNC-UCL"/>
</dbReference>
<dbReference type="GO" id="GO:0001616">
    <property type="term" value="F:growth hormone secretagogue receptor activity"/>
    <property type="evidence" value="ECO:0000314"/>
    <property type="project" value="HGNC-UCL"/>
</dbReference>
<dbReference type="GO" id="GO:0016520">
    <property type="term" value="F:growth hormone-releasing hormone receptor activity"/>
    <property type="evidence" value="ECO:0000314"/>
    <property type="project" value="HGNC-UCL"/>
</dbReference>
<dbReference type="GO" id="GO:0008154">
    <property type="term" value="P:actin polymerization or depolymerization"/>
    <property type="evidence" value="ECO:0000250"/>
    <property type="project" value="UniProtKB"/>
</dbReference>
<dbReference type="GO" id="GO:0046697">
    <property type="term" value="P:decidualization"/>
    <property type="evidence" value="ECO:0000250"/>
    <property type="project" value="UniProtKB"/>
</dbReference>
<dbReference type="GO" id="GO:0007186">
    <property type="term" value="P:G protein-coupled receptor signaling pathway"/>
    <property type="evidence" value="ECO:0000314"/>
    <property type="project" value="HGNC-UCL"/>
</dbReference>
<dbReference type="GO" id="GO:0009755">
    <property type="term" value="P:hormone-mediated signaling pathway"/>
    <property type="evidence" value="ECO:0000314"/>
    <property type="project" value="HGNC-UCL"/>
</dbReference>
<dbReference type="GO" id="GO:0050728">
    <property type="term" value="P:negative regulation of inflammatory response"/>
    <property type="evidence" value="ECO:0000250"/>
    <property type="project" value="UniProtKB"/>
</dbReference>
<dbReference type="GO" id="GO:0032691">
    <property type="term" value="P:negative regulation of interleukin-1 beta production"/>
    <property type="evidence" value="ECO:0000250"/>
    <property type="project" value="UniProtKB"/>
</dbReference>
<dbReference type="GO" id="GO:0032715">
    <property type="term" value="P:negative regulation of interleukin-6 production"/>
    <property type="evidence" value="ECO:0000250"/>
    <property type="project" value="UniProtKB"/>
</dbReference>
<dbReference type="GO" id="GO:0032720">
    <property type="term" value="P:negative regulation of tumor necrosis factor production"/>
    <property type="evidence" value="ECO:0000250"/>
    <property type="project" value="UniProtKB"/>
</dbReference>
<dbReference type="GO" id="GO:0040018">
    <property type="term" value="P:positive regulation of multicellular organism growth"/>
    <property type="evidence" value="ECO:0000250"/>
    <property type="project" value="UniProtKB"/>
</dbReference>
<dbReference type="GO" id="GO:0009725">
    <property type="term" value="P:response to hormone"/>
    <property type="evidence" value="ECO:0000250"/>
    <property type="project" value="UniProtKB"/>
</dbReference>
<dbReference type="CDD" id="cd15131">
    <property type="entry name" value="7tmA_GHSR"/>
    <property type="match status" value="1"/>
</dbReference>
<dbReference type="FunFam" id="1.20.1070.10:FF:000125">
    <property type="entry name" value="growth hormone secretagogue receptor type 1"/>
    <property type="match status" value="1"/>
</dbReference>
<dbReference type="Gene3D" id="1.20.1070.10">
    <property type="entry name" value="Rhodopsin 7-helix transmembrane proteins"/>
    <property type="match status" value="1"/>
</dbReference>
<dbReference type="InterPro" id="IPR003905">
    <property type="entry name" value="GHS-R/MTLR"/>
</dbReference>
<dbReference type="InterPro" id="IPR000276">
    <property type="entry name" value="GPCR_Rhodpsn"/>
</dbReference>
<dbReference type="InterPro" id="IPR017452">
    <property type="entry name" value="GPCR_Rhodpsn_7TM"/>
</dbReference>
<dbReference type="PANTHER" id="PTHR24243">
    <property type="entry name" value="G-PROTEIN COUPLED RECEPTOR"/>
    <property type="match status" value="1"/>
</dbReference>
<dbReference type="PANTHER" id="PTHR24243:SF7">
    <property type="entry name" value="GROWTH HORMONE SECRETAGOGUE RECEPTOR TYPE 1"/>
    <property type="match status" value="1"/>
</dbReference>
<dbReference type="Pfam" id="PF00001">
    <property type="entry name" value="7tm_1"/>
    <property type="match status" value="1"/>
</dbReference>
<dbReference type="PRINTS" id="PR01417">
    <property type="entry name" value="GHSRECEPTOR"/>
</dbReference>
<dbReference type="PRINTS" id="PR00237">
    <property type="entry name" value="GPCRRHODOPSN"/>
</dbReference>
<dbReference type="SUPFAM" id="SSF81321">
    <property type="entry name" value="Family A G protein-coupled receptor-like"/>
    <property type="match status" value="1"/>
</dbReference>
<dbReference type="PROSITE" id="PS00237">
    <property type="entry name" value="G_PROTEIN_RECEP_F1_1"/>
    <property type="match status" value="1"/>
</dbReference>
<dbReference type="PROSITE" id="PS50262">
    <property type="entry name" value="G_PROTEIN_RECEP_F1_2"/>
    <property type="match status" value="1"/>
</dbReference>
<proteinExistence type="evidence at transcript level"/>
<feature type="chain" id="PRO_0000069481" description="Growth hormone secretagogue receptor type 1">
    <location>
        <begin position="1"/>
        <end position="366"/>
    </location>
</feature>
<feature type="topological domain" description="Extracellular" evidence="1">
    <location>
        <begin position="1"/>
        <end position="40"/>
    </location>
</feature>
<feature type="transmembrane region" description="Helical; Name=1" evidence="1">
    <location>
        <begin position="41"/>
        <end position="66"/>
    </location>
</feature>
<feature type="topological domain" description="Cytoplasmic" evidence="1">
    <location>
        <begin position="67"/>
        <end position="72"/>
    </location>
</feature>
<feature type="transmembrane region" description="Helical; Name=2" evidence="1">
    <location>
        <begin position="73"/>
        <end position="96"/>
    </location>
</feature>
<feature type="topological domain" description="Extracellular" evidence="1">
    <location>
        <begin position="97"/>
        <end position="117"/>
    </location>
</feature>
<feature type="transmembrane region" description="Helical; Name=3" evidence="1">
    <location>
        <begin position="118"/>
        <end position="139"/>
    </location>
</feature>
<feature type="topological domain" description="Cytoplasmic" evidence="1">
    <location>
        <begin position="140"/>
        <end position="162"/>
    </location>
</feature>
<feature type="transmembrane region" description="Helical; Name=4" evidence="1">
    <location>
        <begin position="163"/>
        <end position="183"/>
    </location>
</feature>
<feature type="topological domain" description="Extracellular" evidence="1">
    <location>
        <begin position="184"/>
        <end position="211"/>
    </location>
</feature>
<feature type="transmembrane region" description="Helical; Name=5" evidence="1">
    <location>
        <begin position="212"/>
        <end position="235"/>
    </location>
</feature>
<feature type="topological domain" description="Cytoplasmic" evidence="1">
    <location>
        <begin position="236"/>
        <end position="263"/>
    </location>
</feature>
<feature type="transmembrane region" description="Helical; Name=6" evidence="1">
    <location>
        <begin position="264"/>
        <end position="285"/>
    </location>
</feature>
<feature type="topological domain" description="Extracellular" evidence="1">
    <location>
        <begin position="286"/>
        <end position="302"/>
    </location>
</feature>
<feature type="transmembrane region" description="Helical; Name=7" evidence="1">
    <location>
        <begin position="303"/>
        <end position="326"/>
    </location>
</feature>
<feature type="topological domain" description="Cytoplasmic" evidence="1">
    <location>
        <begin position="327"/>
        <end position="366"/>
    </location>
</feature>
<feature type="glycosylation site" description="N-linked (GlcNAc...) asparagine" evidence="1">
    <location>
        <position position="13"/>
    </location>
</feature>
<feature type="glycosylation site" description="N-linked (GlcNAc...) asparagine" evidence="1">
    <location>
        <position position="27"/>
    </location>
</feature>
<feature type="disulfide bond" evidence="2">
    <location>
        <begin position="116"/>
        <end position="198"/>
    </location>
</feature>
<feature type="splice variant" id="VSP_001918" description="In isoform 1B." evidence="3">
    <original>AVVVFAFILCWLPFHVGRYLFSKS</original>
    <variation>GGSQCALELSLPGPLHSSCLFSSP</variation>
    <location>
        <begin position="266"/>
        <end position="289"/>
    </location>
</feature>
<feature type="splice variant" id="VSP_001919" description="In isoform 1B." evidence="3">
    <location>
        <begin position="290"/>
        <end position="366"/>
    </location>
</feature>
<keyword id="KW-0025">Alternative splicing</keyword>
<keyword id="KW-1003">Cell membrane</keyword>
<keyword id="KW-1015">Disulfide bond</keyword>
<keyword id="KW-0297">G-protein coupled receptor</keyword>
<keyword id="KW-0325">Glycoprotein</keyword>
<keyword id="KW-0472">Membrane</keyword>
<keyword id="KW-0675">Receptor</keyword>
<keyword id="KW-1185">Reference proteome</keyword>
<keyword id="KW-0807">Transducer</keyword>
<keyword id="KW-0812">Transmembrane</keyword>
<keyword id="KW-1133">Transmembrane helix</keyword>
<evidence type="ECO:0000255" key="1"/>
<evidence type="ECO:0000255" key="2">
    <source>
        <dbReference type="PROSITE-ProRule" id="PRU00521"/>
    </source>
</evidence>
<evidence type="ECO:0000303" key="3">
    <source>
    </source>
</evidence>